<evidence type="ECO:0000255" key="1">
    <source>
        <dbReference type="HAMAP-Rule" id="MF_00139"/>
    </source>
</evidence>
<evidence type="ECO:0000255" key="2">
    <source>
        <dbReference type="PROSITE-ProRule" id="PRU01202"/>
    </source>
</evidence>
<name>PUR9_AGRFC</name>
<organism>
    <name type="scientific">Agrobacterium fabrum (strain C58 / ATCC 33970)</name>
    <name type="common">Agrobacterium tumefaciens (strain C58)</name>
    <dbReference type="NCBI Taxonomy" id="176299"/>
    <lineage>
        <taxon>Bacteria</taxon>
        <taxon>Pseudomonadati</taxon>
        <taxon>Pseudomonadota</taxon>
        <taxon>Alphaproteobacteria</taxon>
        <taxon>Hyphomicrobiales</taxon>
        <taxon>Rhizobiaceae</taxon>
        <taxon>Rhizobium/Agrobacterium group</taxon>
        <taxon>Agrobacterium</taxon>
        <taxon>Agrobacterium tumefaciens complex</taxon>
    </lineage>
</organism>
<comment type="catalytic activity">
    <reaction evidence="1">
        <text>(6R)-10-formyltetrahydrofolate + 5-amino-1-(5-phospho-beta-D-ribosyl)imidazole-4-carboxamide = 5-formamido-1-(5-phospho-D-ribosyl)imidazole-4-carboxamide + (6S)-5,6,7,8-tetrahydrofolate</text>
        <dbReference type="Rhea" id="RHEA:22192"/>
        <dbReference type="ChEBI" id="CHEBI:57453"/>
        <dbReference type="ChEBI" id="CHEBI:58467"/>
        <dbReference type="ChEBI" id="CHEBI:58475"/>
        <dbReference type="ChEBI" id="CHEBI:195366"/>
        <dbReference type="EC" id="2.1.2.3"/>
    </reaction>
</comment>
<comment type="catalytic activity">
    <reaction evidence="1">
        <text>IMP + H2O = 5-formamido-1-(5-phospho-D-ribosyl)imidazole-4-carboxamide</text>
        <dbReference type="Rhea" id="RHEA:18445"/>
        <dbReference type="ChEBI" id="CHEBI:15377"/>
        <dbReference type="ChEBI" id="CHEBI:58053"/>
        <dbReference type="ChEBI" id="CHEBI:58467"/>
        <dbReference type="EC" id="3.5.4.10"/>
    </reaction>
</comment>
<comment type="pathway">
    <text evidence="1">Purine metabolism; IMP biosynthesis via de novo pathway; 5-formamido-1-(5-phospho-D-ribosyl)imidazole-4-carboxamide from 5-amino-1-(5-phospho-D-ribosyl)imidazole-4-carboxamide (10-formyl THF route): step 1/1.</text>
</comment>
<comment type="pathway">
    <text evidence="1">Purine metabolism; IMP biosynthesis via de novo pathway; IMP from 5-formamido-1-(5-phospho-D-ribosyl)imidazole-4-carboxamide: step 1/1.</text>
</comment>
<comment type="domain">
    <text evidence="1">The IMP cyclohydrolase activity resides in the N-terminal region.</text>
</comment>
<comment type="similarity">
    <text evidence="1">Belongs to the PurH family.</text>
</comment>
<proteinExistence type="inferred from homology"/>
<sequence>MAVVSKKIPAPDKVKIRTALLSVSDKTDIIELATVLSKLGVKLLSTGGTAKAIAEAGLAVTDVSDVTNFPEIMDGRVKTLHPNVHGGLLAIRDDAEHVEAMKAHGIEAIDLSVINLYPFEEVRAKGGDYPTTVENIDIGGPAMIRASAKNHAYVTVVTDPSDYPALVEALQADDGQTSYALRQRFAAKAYARTAAYDAVISNWFAEALAIETPHYRAIGGVLKEKMRYGENPHQSAGFYLTGEKRPGVATATLLQGKQLSYNNINDTDAAYELVAEFLPENAPAVAIVKHANPCGVATGPTLAEAYRRALACDSVSAFGGVIALNRTLDAETAEEIVKLFTEVIIAPDVTEEAKSIIARKPNLRLLAAGGLPDPRAAGLTAKTVSGGLLVQSRDNGMVEDLELKVVTKRAPTAQELEDMKFAFKIAKHVKSNAVIYAKDGQTAGIGAGQMSRVDSARIAAQKAEDAAKALGLAEPLTRGSAVASEAFYPFADGLLAAIAAGATAVIQPGGSMRDQDVIDAANEHNVAMVFTGMRHFRH</sequence>
<gene>
    <name evidence="1" type="primary">purH</name>
    <name type="ordered locus">Atu2823</name>
    <name type="ORF">AGR_C_5117</name>
</gene>
<reference key="1">
    <citation type="journal article" date="2001" name="Science">
        <title>The genome of the natural genetic engineer Agrobacterium tumefaciens C58.</title>
        <authorList>
            <person name="Wood D.W."/>
            <person name="Setubal J.C."/>
            <person name="Kaul R."/>
            <person name="Monks D.E."/>
            <person name="Kitajima J.P."/>
            <person name="Okura V.K."/>
            <person name="Zhou Y."/>
            <person name="Chen L."/>
            <person name="Wood G.E."/>
            <person name="Almeida N.F. Jr."/>
            <person name="Woo L."/>
            <person name="Chen Y."/>
            <person name="Paulsen I.T."/>
            <person name="Eisen J.A."/>
            <person name="Karp P.D."/>
            <person name="Bovee D. Sr."/>
            <person name="Chapman P."/>
            <person name="Clendenning J."/>
            <person name="Deatherage G."/>
            <person name="Gillet W."/>
            <person name="Grant C."/>
            <person name="Kutyavin T."/>
            <person name="Levy R."/>
            <person name="Li M.-J."/>
            <person name="McClelland E."/>
            <person name="Palmieri A."/>
            <person name="Raymond C."/>
            <person name="Rouse G."/>
            <person name="Saenphimmachak C."/>
            <person name="Wu Z."/>
            <person name="Romero P."/>
            <person name="Gordon D."/>
            <person name="Zhang S."/>
            <person name="Yoo H."/>
            <person name="Tao Y."/>
            <person name="Biddle P."/>
            <person name="Jung M."/>
            <person name="Krespan W."/>
            <person name="Perry M."/>
            <person name="Gordon-Kamm B."/>
            <person name="Liao L."/>
            <person name="Kim S."/>
            <person name="Hendrick C."/>
            <person name="Zhao Z.-Y."/>
            <person name="Dolan M."/>
            <person name="Chumley F."/>
            <person name="Tingey S.V."/>
            <person name="Tomb J.-F."/>
            <person name="Gordon M.P."/>
            <person name="Olson M.V."/>
            <person name="Nester E.W."/>
        </authorList>
    </citation>
    <scope>NUCLEOTIDE SEQUENCE [LARGE SCALE GENOMIC DNA]</scope>
    <source>
        <strain>C58 / ATCC 33970</strain>
    </source>
</reference>
<reference key="2">
    <citation type="journal article" date="2001" name="Science">
        <title>Genome sequence of the plant pathogen and biotechnology agent Agrobacterium tumefaciens C58.</title>
        <authorList>
            <person name="Goodner B."/>
            <person name="Hinkle G."/>
            <person name="Gattung S."/>
            <person name="Miller N."/>
            <person name="Blanchard M."/>
            <person name="Qurollo B."/>
            <person name="Goldman B.S."/>
            <person name="Cao Y."/>
            <person name="Askenazi M."/>
            <person name="Halling C."/>
            <person name="Mullin L."/>
            <person name="Houmiel K."/>
            <person name="Gordon J."/>
            <person name="Vaudin M."/>
            <person name="Iartchouk O."/>
            <person name="Epp A."/>
            <person name="Liu F."/>
            <person name="Wollam C."/>
            <person name="Allinger M."/>
            <person name="Doughty D."/>
            <person name="Scott C."/>
            <person name="Lappas C."/>
            <person name="Markelz B."/>
            <person name="Flanagan C."/>
            <person name="Crowell C."/>
            <person name="Gurson J."/>
            <person name="Lomo C."/>
            <person name="Sear C."/>
            <person name="Strub G."/>
            <person name="Cielo C."/>
            <person name="Slater S."/>
        </authorList>
    </citation>
    <scope>NUCLEOTIDE SEQUENCE [LARGE SCALE GENOMIC DNA]</scope>
    <source>
        <strain>C58 / ATCC 33970</strain>
    </source>
</reference>
<keyword id="KW-0378">Hydrolase</keyword>
<keyword id="KW-0511">Multifunctional enzyme</keyword>
<keyword id="KW-0658">Purine biosynthesis</keyword>
<keyword id="KW-1185">Reference proteome</keyword>
<keyword id="KW-0808">Transferase</keyword>
<dbReference type="EC" id="2.1.2.3" evidence="1"/>
<dbReference type="EC" id="3.5.4.10" evidence="1"/>
<dbReference type="EMBL" id="AE007869">
    <property type="protein sequence ID" value="AAK88535.2"/>
    <property type="molecule type" value="Genomic_DNA"/>
</dbReference>
<dbReference type="PIR" id="AF2923">
    <property type="entry name" value="AF2923"/>
</dbReference>
<dbReference type="PIR" id="F97697">
    <property type="entry name" value="F97697"/>
</dbReference>
<dbReference type="RefSeq" id="NP_355750.2">
    <property type="nucleotide sequence ID" value="NC_003062.2"/>
</dbReference>
<dbReference type="RefSeq" id="WP_010972592.1">
    <property type="nucleotide sequence ID" value="NC_003062.2"/>
</dbReference>
<dbReference type="SMR" id="Q8UBM8"/>
<dbReference type="STRING" id="176299.Atu2823"/>
<dbReference type="EnsemblBacteria" id="AAK88535">
    <property type="protein sequence ID" value="AAK88535"/>
    <property type="gene ID" value="Atu2823"/>
</dbReference>
<dbReference type="GeneID" id="1134861"/>
<dbReference type="KEGG" id="atu:Atu2823"/>
<dbReference type="PATRIC" id="fig|176299.10.peg.2832"/>
<dbReference type="eggNOG" id="COG0138">
    <property type="taxonomic scope" value="Bacteria"/>
</dbReference>
<dbReference type="HOGENOM" id="CLU_016316_5_2_5"/>
<dbReference type="OrthoDB" id="9802065at2"/>
<dbReference type="PhylomeDB" id="Q8UBM8"/>
<dbReference type="BioCyc" id="AGRO:ATU2823-MONOMER"/>
<dbReference type="UniPathway" id="UPA00074">
    <property type="reaction ID" value="UER00133"/>
</dbReference>
<dbReference type="UniPathway" id="UPA00074">
    <property type="reaction ID" value="UER00135"/>
</dbReference>
<dbReference type="Proteomes" id="UP000000813">
    <property type="component" value="Chromosome circular"/>
</dbReference>
<dbReference type="GO" id="GO:0005829">
    <property type="term" value="C:cytosol"/>
    <property type="evidence" value="ECO:0007669"/>
    <property type="project" value="TreeGrafter"/>
</dbReference>
<dbReference type="GO" id="GO:0003937">
    <property type="term" value="F:IMP cyclohydrolase activity"/>
    <property type="evidence" value="ECO:0007669"/>
    <property type="project" value="UniProtKB-UniRule"/>
</dbReference>
<dbReference type="GO" id="GO:0004643">
    <property type="term" value="F:phosphoribosylaminoimidazolecarboxamide formyltransferase activity"/>
    <property type="evidence" value="ECO:0007669"/>
    <property type="project" value="UniProtKB-UniRule"/>
</dbReference>
<dbReference type="GO" id="GO:0006189">
    <property type="term" value="P:'de novo' IMP biosynthetic process"/>
    <property type="evidence" value="ECO:0007669"/>
    <property type="project" value="UniProtKB-UniRule"/>
</dbReference>
<dbReference type="CDD" id="cd01421">
    <property type="entry name" value="IMPCH"/>
    <property type="match status" value="1"/>
</dbReference>
<dbReference type="FunFam" id="3.40.140.20:FF:000001">
    <property type="entry name" value="Bifunctional purine biosynthesis protein PurH"/>
    <property type="match status" value="1"/>
</dbReference>
<dbReference type="FunFam" id="3.40.140.20:FF:000002">
    <property type="entry name" value="Bifunctional purine biosynthesis protein PurH"/>
    <property type="match status" value="1"/>
</dbReference>
<dbReference type="FunFam" id="3.40.50.1380:FF:000001">
    <property type="entry name" value="Bifunctional purine biosynthesis protein PurH"/>
    <property type="match status" value="1"/>
</dbReference>
<dbReference type="Gene3D" id="3.40.140.20">
    <property type="match status" value="2"/>
</dbReference>
<dbReference type="Gene3D" id="3.40.50.1380">
    <property type="entry name" value="Methylglyoxal synthase-like domain"/>
    <property type="match status" value="1"/>
</dbReference>
<dbReference type="HAMAP" id="MF_00139">
    <property type="entry name" value="PurH"/>
    <property type="match status" value="1"/>
</dbReference>
<dbReference type="InterPro" id="IPR024051">
    <property type="entry name" value="AICAR_Tfase_dup_dom_sf"/>
</dbReference>
<dbReference type="InterPro" id="IPR016193">
    <property type="entry name" value="Cytidine_deaminase-like"/>
</dbReference>
<dbReference type="InterPro" id="IPR011607">
    <property type="entry name" value="MGS-like_dom"/>
</dbReference>
<dbReference type="InterPro" id="IPR036914">
    <property type="entry name" value="MGS-like_dom_sf"/>
</dbReference>
<dbReference type="InterPro" id="IPR002695">
    <property type="entry name" value="PurH-like"/>
</dbReference>
<dbReference type="NCBIfam" id="NF002049">
    <property type="entry name" value="PRK00881.1"/>
    <property type="match status" value="1"/>
</dbReference>
<dbReference type="NCBIfam" id="TIGR00355">
    <property type="entry name" value="purH"/>
    <property type="match status" value="1"/>
</dbReference>
<dbReference type="PANTHER" id="PTHR11692:SF0">
    <property type="entry name" value="BIFUNCTIONAL PURINE BIOSYNTHESIS PROTEIN ATIC"/>
    <property type="match status" value="1"/>
</dbReference>
<dbReference type="PANTHER" id="PTHR11692">
    <property type="entry name" value="BIFUNCTIONAL PURINE BIOSYNTHESIS PROTEIN PURH"/>
    <property type="match status" value="1"/>
</dbReference>
<dbReference type="Pfam" id="PF01808">
    <property type="entry name" value="AICARFT_IMPCHas"/>
    <property type="match status" value="1"/>
</dbReference>
<dbReference type="Pfam" id="PF02142">
    <property type="entry name" value="MGS"/>
    <property type="match status" value="1"/>
</dbReference>
<dbReference type="PIRSF" id="PIRSF000414">
    <property type="entry name" value="AICARFT_IMPCHas"/>
    <property type="match status" value="1"/>
</dbReference>
<dbReference type="SMART" id="SM00798">
    <property type="entry name" value="AICARFT_IMPCHas"/>
    <property type="match status" value="1"/>
</dbReference>
<dbReference type="SMART" id="SM00851">
    <property type="entry name" value="MGS"/>
    <property type="match status" value="1"/>
</dbReference>
<dbReference type="SUPFAM" id="SSF53927">
    <property type="entry name" value="Cytidine deaminase-like"/>
    <property type="match status" value="1"/>
</dbReference>
<dbReference type="SUPFAM" id="SSF52335">
    <property type="entry name" value="Methylglyoxal synthase-like"/>
    <property type="match status" value="1"/>
</dbReference>
<dbReference type="PROSITE" id="PS51855">
    <property type="entry name" value="MGS"/>
    <property type="match status" value="1"/>
</dbReference>
<protein>
    <recommendedName>
        <fullName evidence="1">Bifunctional purine biosynthesis protein PurH</fullName>
    </recommendedName>
    <domain>
        <recommendedName>
            <fullName evidence="1">Phosphoribosylaminoimidazolecarboxamide formyltransferase</fullName>
            <ecNumber evidence="1">2.1.2.3</ecNumber>
        </recommendedName>
        <alternativeName>
            <fullName evidence="1">AICAR transformylase</fullName>
        </alternativeName>
    </domain>
    <domain>
        <recommendedName>
            <fullName evidence="1">IMP cyclohydrolase</fullName>
            <ecNumber evidence="1">3.5.4.10</ecNumber>
        </recommendedName>
        <alternativeName>
            <fullName evidence="1">ATIC</fullName>
        </alternativeName>
        <alternativeName>
            <fullName evidence="1">IMP synthase</fullName>
        </alternativeName>
        <alternativeName>
            <fullName evidence="1">Inosinicase</fullName>
        </alternativeName>
    </domain>
</protein>
<feature type="chain" id="PRO_0000192066" description="Bifunctional purine biosynthesis protein PurH">
    <location>
        <begin position="1"/>
        <end position="538"/>
    </location>
</feature>
<feature type="domain" description="MGS-like" evidence="2">
    <location>
        <begin position="8"/>
        <end position="158"/>
    </location>
</feature>
<accession>Q8UBM8</accession>